<feature type="chain" id="PRO_0000164370" description="Neuron-specific vesicular protein calcyon">
    <location>
        <begin position="1"/>
        <end position="226"/>
    </location>
</feature>
<feature type="topological domain" description="Extracellular" evidence="2">
    <location>
        <begin position="1"/>
        <end position="88"/>
    </location>
</feature>
<feature type="transmembrane region" description="Helical" evidence="2">
    <location>
        <begin position="89"/>
        <end position="109"/>
    </location>
</feature>
<feature type="topological domain" description="Cytoplasmic" evidence="2">
    <location>
        <begin position="110"/>
        <end position="226"/>
    </location>
</feature>
<feature type="region of interest" description="Disordered" evidence="3">
    <location>
        <begin position="1"/>
        <end position="23"/>
    </location>
</feature>
<feature type="region of interest" description="Disordered" evidence="3">
    <location>
        <begin position="189"/>
        <end position="226"/>
    </location>
</feature>
<feature type="compositionally biased region" description="Basic and acidic residues" evidence="3">
    <location>
        <begin position="206"/>
        <end position="219"/>
    </location>
</feature>
<dbReference type="EMBL" id="AF303658">
    <property type="protein sequence ID" value="AAL09318.1"/>
    <property type="molecule type" value="mRNA"/>
</dbReference>
<dbReference type="RefSeq" id="NP_001177328.1">
    <property type="nucleotide sequence ID" value="NM_001190399.1"/>
</dbReference>
<dbReference type="RefSeq" id="NP_620270.1">
    <property type="nucleotide sequence ID" value="NM_138915.1"/>
</dbReference>
<dbReference type="BioGRID" id="251406">
    <property type="interactions" value="1"/>
</dbReference>
<dbReference type="FunCoup" id="P58821">
    <property type="interactions" value="505"/>
</dbReference>
<dbReference type="STRING" id="10116.ENSRNOP00000024766"/>
<dbReference type="iPTMnet" id="P58821"/>
<dbReference type="PhosphoSitePlus" id="P58821"/>
<dbReference type="PaxDb" id="10116-ENSRNOP00000024766"/>
<dbReference type="Ensembl" id="ENSRNOT00000089729.2">
    <property type="protein sequence ID" value="ENSRNOP00000069564.1"/>
    <property type="gene ID" value="ENSRNOG00000018337.7"/>
</dbReference>
<dbReference type="GeneID" id="192349"/>
<dbReference type="KEGG" id="rno:192349"/>
<dbReference type="UCSC" id="RGD:621719">
    <property type="organism name" value="rat"/>
</dbReference>
<dbReference type="AGR" id="RGD:621719"/>
<dbReference type="CTD" id="50632"/>
<dbReference type="RGD" id="621719">
    <property type="gene designation" value="Caly"/>
</dbReference>
<dbReference type="eggNOG" id="ENOG502QW2S">
    <property type="taxonomic scope" value="Eukaryota"/>
</dbReference>
<dbReference type="GeneTree" id="ENSGT00390000000483"/>
<dbReference type="HOGENOM" id="CLU_112085_1_0_1"/>
<dbReference type="InParanoid" id="P58821"/>
<dbReference type="OMA" id="ILKQKHC"/>
<dbReference type="OrthoDB" id="9866545at2759"/>
<dbReference type="PhylomeDB" id="P58821"/>
<dbReference type="TreeFam" id="TF332232"/>
<dbReference type="PRO" id="PR:P58821"/>
<dbReference type="Proteomes" id="UP000002494">
    <property type="component" value="Chromosome 1"/>
</dbReference>
<dbReference type="Bgee" id="ENSRNOG00000018337">
    <property type="expression patterns" value="Expressed in cerebellum and 12 other cell types or tissues"/>
</dbReference>
<dbReference type="GO" id="GO:0030424">
    <property type="term" value="C:axon"/>
    <property type="evidence" value="ECO:0000314"/>
    <property type="project" value="RGD"/>
</dbReference>
<dbReference type="GO" id="GO:1904115">
    <property type="term" value="C:axon cytoplasm"/>
    <property type="evidence" value="ECO:0007669"/>
    <property type="project" value="GOC"/>
</dbReference>
<dbReference type="GO" id="GO:0031410">
    <property type="term" value="C:cytoplasmic vesicle"/>
    <property type="evidence" value="ECO:0000250"/>
    <property type="project" value="UniProtKB"/>
</dbReference>
<dbReference type="GO" id="GO:0030659">
    <property type="term" value="C:cytoplasmic vesicle membrane"/>
    <property type="evidence" value="ECO:0007669"/>
    <property type="project" value="UniProtKB-SubCell"/>
</dbReference>
<dbReference type="GO" id="GO:0005768">
    <property type="term" value="C:endosome"/>
    <property type="evidence" value="ECO:0000318"/>
    <property type="project" value="GO_Central"/>
</dbReference>
<dbReference type="GO" id="GO:0098978">
    <property type="term" value="C:glutamatergic synapse"/>
    <property type="evidence" value="ECO:0000266"/>
    <property type="project" value="RGD"/>
</dbReference>
<dbReference type="GO" id="GO:0016020">
    <property type="term" value="C:membrane"/>
    <property type="evidence" value="ECO:0000318"/>
    <property type="project" value="GO_Central"/>
</dbReference>
<dbReference type="GO" id="GO:0005886">
    <property type="term" value="C:plasma membrane"/>
    <property type="evidence" value="ECO:0000250"/>
    <property type="project" value="UniProtKB"/>
</dbReference>
<dbReference type="GO" id="GO:0098843">
    <property type="term" value="C:postsynaptic endocytic zone"/>
    <property type="evidence" value="ECO:0000266"/>
    <property type="project" value="RGD"/>
</dbReference>
<dbReference type="GO" id="GO:0032051">
    <property type="term" value="F:clathrin light chain binding"/>
    <property type="evidence" value="ECO:0000250"/>
    <property type="project" value="UniProtKB"/>
</dbReference>
<dbReference type="GO" id="GO:0044877">
    <property type="term" value="F:protein-containing complex binding"/>
    <property type="evidence" value="ECO:0000353"/>
    <property type="project" value="RGD"/>
</dbReference>
<dbReference type="GO" id="GO:0008089">
    <property type="term" value="P:anterograde axonal transport"/>
    <property type="evidence" value="ECO:0000315"/>
    <property type="project" value="RGD"/>
</dbReference>
<dbReference type="GO" id="GO:0048268">
    <property type="term" value="P:clathrin coat assembly"/>
    <property type="evidence" value="ECO:0000250"/>
    <property type="project" value="UniProtKB"/>
</dbReference>
<dbReference type="GO" id="GO:0016197">
    <property type="term" value="P:endosomal transport"/>
    <property type="evidence" value="ECO:0000318"/>
    <property type="project" value="GO_Central"/>
</dbReference>
<dbReference type="GO" id="GO:1905445">
    <property type="term" value="P:positive regulation of clathrin coat assembly"/>
    <property type="evidence" value="ECO:0000314"/>
    <property type="project" value="RGD"/>
</dbReference>
<dbReference type="GO" id="GO:0045807">
    <property type="term" value="P:positive regulation of endocytosis"/>
    <property type="evidence" value="ECO:0000250"/>
    <property type="project" value="UniProtKB"/>
</dbReference>
<dbReference type="GO" id="GO:2001019">
    <property type="term" value="P:positive regulation of retrograde axon cargo transport"/>
    <property type="evidence" value="ECO:0000315"/>
    <property type="project" value="RGD"/>
</dbReference>
<dbReference type="GO" id="GO:0098884">
    <property type="term" value="P:postsynaptic neurotransmitter receptor internalization"/>
    <property type="evidence" value="ECO:0000266"/>
    <property type="project" value="RGD"/>
</dbReference>
<dbReference type="InterPro" id="IPR009431">
    <property type="entry name" value="NSG"/>
</dbReference>
<dbReference type="PANTHER" id="PTHR28546:SF1">
    <property type="entry name" value="NEURON-SPECIFIC VESICULAR PROTEIN CALCYON"/>
    <property type="match status" value="1"/>
</dbReference>
<dbReference type="PANTHER" id="PTHR28546">
    <property type="entry name" value="NEURONAL VESICLE TRAFFICKING-ASSOCIATED PROTEIN 2-RELATED"/>
    <property type="match status" value="1"/>
</dbReference>
<dbReference type="Pfam" id="PF06387">
    <property type="entry name" value="Calcyon"/>
    <property type="match status" value="1"/>
</dbReference>
<dbReference type="PIRSF" id="PIRSF002383">
    <property type="entry name" value="Calcyon"/>
    <property type="match status" value="1"/>
</dbReference>
<keyword id="KW-1003">Cell membrane</keyword>
<keyword id="KW-0968">Cytoplasmic vesicle</keyword>
<keyword id="KW-0254">Endocytosis</keyword>
<keyword id="KW-0472">Membrane</keyword>
<keyword id="KW-1185">Reference proteome</keyword>
<keyword id="KW-0812">Transmembrane</keyword>
<keyword id="KW-1133">Transmembrane helix</keyword>
<gene>
    <name type="primary">Caly</name>
    <name type="synonym">Drd1ip</name>
</gene>
<proteinExistence type="evidence at protein level"/>
<protein>
    <recommendedName>
        <fullName>Neuron-specific vesicular protein calcyon</fullName>
    </recommendedName>
</protein>
<name>CALY_RAT</name>
<reference key="1">
    <citation type="journal article" date="2002" name="J. Comp. Neurol.">
        <title>Calcyon in the rat brain: cloning of cDNA and expression of mRNA.</title>
        <authorList>
            <person name="Zelenin S."/>
            <person name="Aperia A."/>
            <person name="Diaz Heijtz R."/>
        </authorList>
    </citation>
    <scope>NUCLEOTIDE SEQUENCE [MRNA]</scope>
    <source>
        <strain>Sprague-Dawley</strain>
        <tissue>Brain</tissue>
    </source>
</reference>
<reference key="2">
    <citation type="journal article" date="2006" name="J. Biol. Chem.">
        <title>Calcyon, a novel partner of clathrin light chain, stimulates clathrin-mediated endocytosis.</title>
        <authorList>
            <person name="Xiao J."/>
            <person name="Dai R."/>
            <person name="Negyessy L."/>
            <person name="Bergson C."/>
        </authorList>
    </citation>
    <scope>FUNCTION</scope>
</reference>
<reference key="3">
    <citation type="journal article" date="2007" name="Behav. Brain Funct.">
        <title>Calcyon mRNA expression in the frontal-striatal circuitry and its relationship to vesicular processes and ADHD.</title>
        <authorList>
            <person name="Heijtz R.D."/>
            <person name="Alexeyenko A."/>
            <person name="Castellanos F.X."/>
        </authorList>
    </citation>
    <scope>TISSUE SPECIFICITY</scope>
    <scope>DEVELOPMENTAL STAGE</scope>
</reference>
<reference key="4">
    <citation type="journal article" date="2007" name="NeuroReport">
        <title>Intracellular dynamics of calcyon, a neuron-specific vesicular protein.</title>
        <authorList>
            <person name="Kruusmagi M."/>
            <person name="Zelenin S."/>
            <person name="Brismar H."/>
            <person name="Scott L."/>
        </authorList>
    </citation>
    <scope>SUBCELLULAR LOCATION</scope>
    <scope>TISSUE SPECIFICITY</scope>
</reference>
<comment type="function">
    <text evidence="4">Interacts with clathrin light chain A and stimulates clathrin self-assembly and clathrin-mediated endocytosis.</text>
</comment>
<comment type="subunit">
    <text evidence="1">Interacts with CLTA.</text>
</comment>
<comment type="subcellular location">
    <subcellularLocation>
        <location evidence="6">Cytoplasmic vesicle membrane</location>
        <topology evidence="6">Single-pass membrane protein</topology>
    </subcellularLocation>
    <subcellularLocation>
        <location evidence="1">Cell membrane</location>
        <topology evidence="1">Single-pass membrane protein</topology>
    </subcellularLocation>
</comment>
<comment type="tissue specificity">
    <text evidence="5 6">Expressed exclusively in neurons (at protein level). In all age groups, expressed at significantly higher levels in the medial prefrontal and orbital frontal cortices of spontaneously hypertensive rats (SHR), a model of attention deficit-hyperactivity disorder, than Wistar Kyoto (WKY) animals. In the motor cortex, dorsal striatum and nucleus accumbens, expression is significantly elevated in SHR only in younger animals.</text>
</comment>
<comment type="developmental stage">
    <text evidence="5">Levels decrease significantly with age.</text>
</comment>
<comment type="similarity">
    <text evidence="7">Belongs to the NSG family.</text>
</comment>
<comment type="caution">
    <text evidence="7">The human ortholog was originally thought to interact with the D1 dopamine receptor (DRD1) and to play a role in potentiating calcium ion-dependent signaling but this work was later retracted.</text>
</comment>
<evidence type="ECO:0000250" key="1"/>
<evidence type="ECO:0000255" key="2"/>
<evidence type="ECO:0000256" key="3">
    <source>
        <dbReference type="SAM" id="MobiDB-lite"/>
    </source>
</evidence>
<evidence type="ECO:0000269" key="4">
    <source>
    </source>
</evidence>
<evidence type="ECO:0000269" key="5">
    <source>
    </source>
</evidence>
<evidence type="ECO:0000269" key="6">
    <source>
    </source>
</evidence>
<evidence type="ECO:0000305" key="7"/>
<sequence>MVKLGCSFSGKPGKETGDQDGAAMDSVPLISPLDVSQLQPSFPDQVVIKTQTEYQLTSADQPKKFADLEGQRLACSHPEEGRRLPTARMIAFAMALLGCVLIMYKAIWYDQFTCPDGFLLRHKICTPLTLEMYYTEMDPERHRSILAAIGAYPLSRKHGTEMPAIWGNSYRAGKEEHKGTTPAAMTVSTAAAAAAAEGNEPSGKPLDMREKEDPQKAEDVPSQSPK</sequence>
<organism>
    <name type="scientific">Rattus norvegicus</name>
    <name type="common">Rat</name>
    <dbReference type="NCBI Taxonomy" id="10116"/>
    <lineage>
        <taxon>Eukaryota</taxon>
        <taxon>Metazoa</taxon>
        <taxon>Chordata</taxon>
        <taxon>Craniata</taxon>
        <taxon>Vertebrata</taxon>
        <taxon>Euteleostomi</taxon>
        <taxon>Mammalia</taxon>
        <taxon>Eutheria</taxon>
        <taxon>Euarchontoglires</taxon>
        <taxon>Glires</taxon>
        <taxon>Rodentia</taxon>
        <taxon>Myomorpha</taxon>
        <taxon>Muroidea</taxon>
        <taxon>Muridae</taxon>
        <taxon>Murinae</taxon>
        <taxon>Rattus</taxon>
    </lineage>
</organism>
<accession>P58821</accession>